<sequence>MVDNLEPLEPSLQNLVEQDSLKWIFVGGKGGVGKTTCSSSLAVQLSKVRESVLIISTDPAHNISDAFDQKFTKVPTKVNGFDNLFAMEIDPNAGLNELPEEYFEGENEALRVSKGVMQEMINALPGIDEAMSYAEVMKLVKGMNFSVVVFDTAPTGHTLRLIAFPQVVEKGLGKLLRLKMKVAPLLSQFVSMLGMADLNADTLSQKLDDMLRVITQVNEQFKNPDQTTFVCVCIAEFFSLYETERLVQELTKCGIDVHNIIVNQLLFLQNSHDSCSMCASRFKIQEKYLDQIADLYEDFHVTKLPLLEKEVRGPESIRSFSENLMKPYEPKAKPKE</sequence>
<feature type="chain" id="PRO_0000388159" description="ATPase ASNA1 homolog">
    <location>
        <begin position="1"/>
        <end position="336"/>
    </location>
</feature>
<feature type="active site" evidence="1">
    <location>
        <position position="58"/>
    </location>
</feature>
<feature type="binding site" evidence="1">
    <location>
        <begin position="29"/>
        <end position="36"/>
    </location>
    <ligand>
        <name>ATP</name>
        <dbReference type="ChEBI" id="CHEBI:30616"/>
    </ligand>
</feature>
<feature type="binding site" evidence="1">
    <location>
        <position position="236"/>
    </location>
    <ligand>
        <name>ATP</name>
        <dbReference type="ChEBI" id="CHEBI:30616"/>
    </ligand>
</feature>
<feature type="binding site" evidence="1">
    <location>
        <position position="263"/>
    </location>
    <ligand>
        <name>ATP</name>
        <dbReference type="ChEBI" id="CHEBI:30616"/>
    </ligand>
</feature>
<feature type="binding site" evidence="1">
    <location>
        <position position="275"/>
    </location>
    <ligand>
        <name>Zn(2+)</name>
        <dbReference type="ChEBI" id="CHEBI:29105"/>
        <note>ligand shared between dimeric partners</note>
    </ligand>
</feature>
<feature type="binding site" evidence="1">
    <location>
        <position position="278"/>
    </location>
    <ligand>
        <name>Zn(2+)</name>
        <dbReference type="ChEBI" id="CHEBI:29105"/>
        <note>ligand shared between dimeric partners</note>
    </ligand>
</feature>
<protein>
    <recommendedName>
        <fullName evidence="1">ATPase ASNA1 homolog</fullName>
        <ecNumber evidence="1">3.6.-.-</ecNumber>
    </recommendedName>
    <alternativeName>
        <fullName evidence="1">Arsenical pump-driving ATPase homolog</fullName>
    </alternativeName>
    <alternativeName>
        <fullName evidence="1">Arsenite-stimulated ATPase</fullName>
    </alternativeName>
</protein>
<keyword id="KW-0067">ATP-binding</keyword>
<keyword id="KW-0963">Cytoplasm</keyword>
<keyword id="KW-0256">Endoplasmic reticulum</keyword>
<keyword id="KW-0378">Hydrolase</keyword>
<keyword id="KW-0479">Metal-binding</keyword>
<keyword id="KW-0547">Nucleotide-binding</keyword>
<keyword id="KW-0813">Transport</keyword>
<keyword id="KW-0862">Zinc</keyword>
<organism>
    <name type="scientific">Drosophila yakuba</name>
    <name type="common">Fruit fly</name>
    <dbReference type="NCBI Taxonomy" id="7245"/>
    <lineage>
        <taxon>Eukaryota</taxon>
        <taxon>Metazoa</taxon>
        <taxon>Ecdysozoa</taxon>
        <taxon>Arthropoda</taxon>
        <taxon>Hexapoda</taxon>
        <taxon>Insecta</taxon>
        <taxon>Pterygota</taxon>
        <taxon>Neoptera</taxon>
        <taxon>Endopterygota</taxon>
        <taxon>Diptera</taxon>
        <taxon>Brachycera</taxon>
        <taxon>Muscomorpha</taxon>
        <taxon>Ephydroidea</taxon>
        <taxon>Drosophilidae</taxon>
        <taxon>Drosophila</taxon>
        <taxon>Sophophora</taxon>
    </lineage>
</organism>
<gene>
    <name type="ORF">GE23838</name>
</gene>
<reference key="1">
    <citation type="journal article" date="2007" name="Nature">
        <title>Evolution of genes and genomes on the Drosophila phylogeny.</title>
        <authorList>
            <consortium name="Drosophila 12 genomes consortium"/>
        </authorList>
    </citation>
    <scope>NUCLEOTIDE SEQUENCE [LARGE SCALE GENOMIC DNA]</scope>
    <source>
        <strain>Tai18E2 / Tucson 14021-0261.01</strain>
    </source>
</reference>
<proteinExistence type="inferred from homology"/>
<evidence type="ECO:0000255" key="1">
    <source>
        <dbReference type="HAMAP-Rule" id="MF_03112"/>
    </source>
</evidence>
<accession>B4P1R6</accession>
<name>ASNA_DROYA</name>
<dbReference type="EC" id="3.6.-.-" evidence="1"/>
<dbReference type="EMBL" id="CM000157">
    <property type="protein sequence ID" value="EDW89202.1"/>
    <property type="molecule type" value="Genomic_DNA"/>
</dbReference>
<dbReference type="SMR" id="B4P1R6"/>
<dbReference type="EnsemblMetazoa" id="FBtr0270356">
    <property type="protein sequence ID" value="FBpp0268848"/>
    <property type="gene ID" value="FBgn0068404"/>
</dbReference>
<dbReference type="EnsemblMetazoa" id="XM_002089454.3">
    <property type="protein sequence ID" value="XP_002089490.1"/>
    <property type="gene ID" value="LOC6528444"/>
</dbReference>
<dbReference type="GeneID" id="6528444"/>
<dbReference type="KEGG" id="dya:Dyak_GE23838"/>
<dbReference type="eggNOG" id="KOG2825">
    <property type="taxonomic scope" value="Eukaryota"/>
</dbReference>
<dbReference type="HOGENOM" id="CLU_040761_0_0_1"/>
<dbReference type="OMA" id="MDAPYEF"/>
<dbReference type="OrthoDB" id="1770at2759"/>
<dbReference type="PhylomeDB" id="B4P1R6"/>
<dbReference type="Proteomes" id="UP000002282">
    <property type="component" value="Chromosome 2L"/>
</dbReference>
<dbReference type="GO" id="GO:0043529">
    <property type="term" value="C:GET complex"/>
    <property type="evidence" value="ECO:0007669"/>
    <property type="project" value="TreeGrafter"/>
</dbReference>
<dbReference type="GO" id="GO:0005524">
    <property type="term" value="F:ATP binding"/>
    <property type="evidence" value="ECO:0007669"/>
    <property type="project" value="UniProtKB-UniRule"/>
</dbReference>
<dbReference type="GO" id="GO:0016887">
    <property type="term" value="F:ATP hydrolysis activity"/>
    <property type="evidence" value="ECO:0007669"/>
    <property type="project" value="InterPro"/>
</dbReference>
<dbReference type="GO" id="GO:0046872">
    <property type="term" value="F:metal ion binding"/>
    <property type="evidence" value="ECO:0007669"/>
    <property type="project" value="UniProtKB-KW"/>
</dbReference>
<dbReference type="GO" id="GO:0071816">
    <property type="term" value="P:tail-anchored membrane protein insertion into ER membrane"/>
    <property type="evidence" value="ECO:0007669"/>
    <property type="project" value="TreeGrafter"/>
</dbReference>
<dbReference type="CDD" id="cd02035">
    <property type="entry name" value="ArsA"/>
    <property type="match status" value="1"/>
</dbReference>
<dbReference type="FunFam" id="3.40.50.300:FF:000235">
    <property type="entry name" value="ATPase ASNA1"/>
    <property type="match status" value="1"/>
</dbReference>
<dbReference type="Gene3D" id="3.40.50.300">
    <property type="entry name" value="P-loop containing nucleotide triphosphate hydrolases"/>
    <property type="match status" value="1"/>
</dbReference>
<dbReference type="HAMAP" id="MF_03112">
    <property type="entry name" value="Asna1_Get3"/>
    <property type="match status" value="1"/>
</dbReference>
<dbReference type="InterPro" id="IPR025723">
    <property type="entry name" value="Anion-transp_ATPase-like_dom"/>
</dbReference>
<dbReference type="InterPro" id="IPR016300">
    <property type="entry name" value="ATPase_ArsA/GET3"/>
</dbReference>
<dbReference type="InterPro" id="IPR027542">
    <property type="entry name" value="ATPase_ArsA/GET3_euk"/>
</dbReference>
<dbReference type="InterPro" id="IPR027417">
    <property type="entry name" value="P-loop_NTPase"/>
</dbReference>
<dbReference type="NCBIfam" id="TIGR00345">
    <property type="entry name" value="GET3_arsA_TRC40"/>
    <property type="match status" value="1"/>
</dbReference>
<dbReference type="PANTHER" id="PTHR10803">
    <property type="entry name" value="ARSENICAL PUMP-DRIVING ATPASE ARSENITE-TRANSLOCATING ATPASE"/>
    <property type="match status" value="1"/>
</dbReference>
<dbReference type="PANTHER" id="PTHR10803:SF3">
    <property type="entry name" value="ATPASE GET3"/>
    <property type="match status" value="1"/>
</dbReference>
<dbReference type="Pfam" id="PF02374">
    <property type="entry name" value="ArsA_ATPase"/>
    <property type="match status" value="1"/>
</dbReference>
<dbReference type="SUPFAM" id="SSF52540">
    <property type="entry name" value="P-loop containing nucleoside triphosphate hydrolases"/>
    <property type="match status" value="1"/>
</dbReference>
<comment type="function">
    <text evidence="1">ATPase required for the post-translational delivery of tail-anchored (TA) proteins to the endoplasmic reticulum. Recognizes and selectively binds the transmembrane domain of TA proteins in the cytosol. This complex then targets to the endoplasmic reticulum by membrane-bound receptors, where the tail-anchored protein is released for insertion. This process is regulated by ATP binding and hydrolysis. ATP binding drives the homodimer towards the closed dimer state, facilitating recognition of newly synthesized TA membrane proteins. ATP hydrolysis is required for insertion. Subsequently, the homodimer reverts towards the open dimer state, lowering its affinity for the membrane-bound receptor, and returning it to the cytosol to initiate a new round of targeting.</text>
</comment>
<comment type="subunit">
    <text evidence="1">Homodimer.</text>
</comment>
<comment type="subcellular location">
    <subcellularLocation>
        <location evidence="1">Cytoplasm</location>
    </subcellularLocation>
    <subcellularLocation>
        <location evidence="1">Endoplasmic reticulum</location>
    </subcellularLocation>
</comment>
<comment type="similarity">
    <text evidence="1">Belongs to the arsA ATPase family.</text>
</comment>